<evidence type="ECO:0000250" key="1"/>
<evidence type="ECO:0000255" key="2"/>
<evidence type="ECO:0000255" key="3">
    <source>
        <dbReference type="PROSITE-ProRule" id="PRU00404"/>
    </source>
</evidence>
<evidence type="ECO:0000255" key="4">
    <source>
        <dbReference type="PROSITE-ProRule" id="PRU01077"/>
    </source>
</evidence>
<evidence type="ECO:0000256" key="5">
    <source>
        <dbReference type="SAM" id="MobiDB-lite"/>
    </source>
</evidence>
<evidence type="ECO:0000269" key="6">
    <source>
    </source>
</evidence>
<evidence type="ECO:0000305" key="7"/>
<comment type="function">
    <text evidence="6">May function in an early step of clathrin-mediated endocytosis. May regulate Bmp signaling by regulating clathrin-mediated endocytosis of Bmp receptors.</text>
</comment>
<comment type="subunit">
    <text evidence="1 6">May oligomerize and form homotetramer (By similarity). Interacts with acvr1l/alk8; linking this receptor to clathrin-mediated endocytosis.</text>
</comment>
<comment type="subcellular location">
    <subcellularLocation>
        <location evidence="1">Membrane</location>
        <location evidence="1">Clathrin-coated pit</location>
        <topology evidence="1">Peripheral membrane protein</topology>
        <orientation evidence="1">Cytoplasmic side</orientation>
    </subcellularLocation>
</comment>
<comment type="disruption phenotype">
    <text evidence="6">Embryos display dorsoventral patterning defects analogous to the one associated with Bmp signal failure.</text>
</comment>
<comment type="similarity">
    <text evidence="7">Belongs to the FCHO family.</text>
</comment>
<keyword id="KW-0168">Coated pit</keyword>
<keyword id="KW-0175">Coiled coil</keyword>
<keyword id="KW-0254">Endocytosis</keyword>
<keyword id="KW-0472">Membrane</keyword>
<keyword id="KW-1185">Reference proteome</keyword>
<organism>
    <name type="scientific">Danio rerio</name>
    <name type="common">Zebrafish</name>
    <name type="synonym">Brachydanio rerio</name>
    <dbReference type="NCBI Taxonomy" id="7955"/>
    <lineage>
        <taxon>Eukaryota</taxon>
        <taxon>Metazoa</taxon>
        <taxon>Chordata</taxon>
        <taxon>Craniata</taxon>
        <taxon>Vertebrata</taxon>
        <taxon>Euteleostomi</taxon>
        <taxon>Actinopterygii</taxon>
        <taxon>Neopterygii</taxon>
        <taxon>Teleostei</taxon>
        <taxon>Ostariophysi</taxon>
        <taxon>Cypriniformes</taxon>
        <taxon>Danionidae</taxon>
        <taxon>Danioninae</taxon>
        <taxon>Danio</taxon>
    </lineage>
</organism>
<feature type="chain" id="PRO_0000417673" description="F-BAR domain only protein 1">
    <location>
        <begin position="1"/>
        <end position="897"/>
    </location>
</feature>
<feature type="domain" description="F-BAR" evidence="4">
    <location>
        <begin position="2"/>
        <end position="248"/>
    </location>
</feature>
<feature type="domain" description="MHD" evidence="3">
    <location>
        <begin position="630"/>
        <end position="894"/>
    </location>
</feature>
<feature type="region of interest" description="Mediates membrane-binding" evidence="1">
    <location>
        <begin position="1"/>
        <end position="276"/>
    </location>
</feature>
<feature type="region of interest" description="Disordered" evidence="5">
    <location>
        <begin position="475"/>
        <end position="537"/>
    </location>
</feature>
<feature type="coiled-coil region" evidence="2">
    <location>
        <begin position="134"/>
        <end position="154"/>
    </location>
</feature>
<feature type="compositionally biased region" description="Polar residues" evidence="5">
    <location>
        <begin position="501"/>
        <end position="520"/>
    </location>
</feature>
<sequence length="897" mass="99110">MIHFFHTLQGEKNAGFDVLYHNMKHGQIATKELAEFVRERAAIEETYSKSMSKLAKMASNGSPLGTFAPMWDVFRVSSDKLALCHLELMRKMNDLIRDINKYSDEQVKIHRKTKEEAIGTLESVQSLQVQNGHLQKTREGYHSKCVELERLRKEGVPQKELEKAELKCKKAAESFAGSIEKFNRAGGDFEQKMSESAQKFQDIEEAHLRQMKLLIKGYSHSIEDTHVQVGQVHEEFKQNVENIGIENLIQKFTEQKGTGKERPEGPVGFEEYLSSLASENSKKSRAKAFRIPGLGKRDKEPDSTVHVYFLQNNSPLEVDDEGFVIRADVKQNDIEKEGNFYSSDSDFDDEEPKKFHIQIRPVASSNRSNSAANEQELKATVGALTLPPNRVVSVKKQLSRRSEGEGESVPQRVIAKVEVCACRLSSTASGSDALFGPPLESAFKSHSFSGREQLQNAFAASEFFSKFYSSSLENVEDSGLDSPSHQPLGVSPDPTGWAAWPSSQSQSKDSINAASQSRGGSNRPTPSPNPAPSSQSNTEWMNDIIREGPYSQIMQDSSERLALAPPRSVRSKRSSVAITRKNSDFSRSLCSSPLPDPNASTCVLYSKMLNCAPAGLSRGPSPISLSAQESWPVAAAITEYINAYFRGGEHNRCLVKITGDLTMSFPAGITRIFTANPNAPVLSFRLVNISRVDHFLPNQKLLYSDPSQSDPDTKDFWFNMQALTLHLQREAELNPQASYYNVALLKYQASSQDPSRAPLLLSAECQRSGTVTRVSLDYHCCPATAPATQLTSVQVLLPLDHSATDLQCQPPAAWNAEERRLLWKLDDLSSVSGSGTLCASWQCLEVPRGPAPSLAVQFVGSGASLSGLDVELVGSRYRMSLVKKRFATGKYMAGCSL</sequence>
<gene>
    <name type="primary">fcho1</name>
</gene>
<protein>
    <recommendedName>
        <fullName>F-BAR domain only protein 1</fullName>
    </recommendedName>
</protein>
<reference key="1">
    <citation type="journal article" date="2013" name="Nature">
        <title>The zebrafish reference genome sequence and its relationship to the human genome.</title>
        <authorList>
            <person name="Howe K."/>
            <person name="Clark M.D."/>
            <person name="Torroja C.F."/>
            <person name="Torrance J."/>
            <person name="Berthelot C."/>
            <person name="Muffato M."/>
            <person name="Collins J.E."/>
            <person name="Humphray S."/>
            <person name="McLaren K."/>
            <person name="Matthews L."/>
            <person name="McLaren S."/>
            <person name="Sealy I."/>
            <person name="Caccamo M."/>
            <person name="Churcher C."/>
            <person name="Scott C."/>
            <person name="Barrett J.C."/>
            <person name="Koch R."/>
            <person name="Rauch G.J."/>
            <person name="White S."/>
            <person name="Chow W."/>
            <person name="Kilian B."/>
            <person name="Quintais L.T."/>
            <person name="Guerra-Assuncao J.A."/>
            <person name="Zhou Y."/>
            <person name="Gu Y."/>
            <person name="Yen J."/>
            <person name="Vogel J.H."/>
            <person name="Eyre T."/>
            <person name="Redmond S."/>
            <person name="Banerjee R."/>
            <person name="Chi J."/>
            <person name="Fu B."/>
            <person name="Langley E."/>
            <person name="Maguire S.F."/>
            <person name="Laird G.K."/>
            <person name="Lloyd D."/>
            <person name="Kenyon E."/>
            <person name="Donaldson S."/>
            <person name="Sehra H."/>
            <person name="Almeida-King J."/>
            <person name="Loveland J."/>
            <person name="Trevanion S."/>
            <person name="Jones M."/>
            <person name="Quail M."/>
            <person name="Willey D."/>
            <person name="Hunt A."/>
            <person name="Burton J."/>
            <person name="Sims S."/>
            <person name="McLay K."/>
            <person name="Plumb B."/>
            <person name="Davis J."/>
            <person name="Clee C."/>
            <person name="Oliver K."/>
            <person name="Clark R."/>
            <person name="Riddle C."/>
            <person name="Elliot D."/>
            <person name="Threadgold G."/>
            <person name="Harden G."/>
            <person name="Ware D."/>
            <person name="Begum S."/>
            <person name="Mortimore B."/>
            <person name="Kerry G."/>
            <person name="Heath P."/>
            <person name="Phillimore B."/>
            <person name="Tracey A."/>
            <person name="Corby N."/>
            <person name="Dunn M."/>
            <person name="Johnson C."/>
            <person name="Wood J."/>
            <person name="Clark S."/>
            <person name="Pelan S."/>
            <person name="Griffiths G."/>
            <person name="Smith M."/>
            <person name="Glithero R."/>
            <person name="Howden P."/>
            <person name="Barker N."/>
            <person name="Lloyd C."/>
            <person name="Stevens C."/>
            <person name="Harley J."/>
            <person name="Holt K."/>
            <person name="Panagiotidis G."/>
            <person name="Lovell J."/>
            <person name="Beasley H."/>
            <person name="Henderson C."/>
            <person name="Gordon D."/>
            <person name="Auger K."/>
            <person name="Wright D."/>
            <person name="Collins J."/>
            <person name="Raisen C."/>
            <person name="Dyer L."/>
            <person name="Leung K."/>
            <person name="Robertson L."/>
            <person name="Ambridge K."/>
            <person name="Leongamornlert D."/>
            <person name="McGuire S."/>
            <person name="Gilderthorp R."/>
            <person name="Griffiths C."/>
            <person name="Manthravadi D."/>
            <person name="Nichol S."/>
            <person name="Barker G."/>
            <person name="Whitehead S."/>
            <person name="Kay M."/>
            <person name="Brown J."/>
            <person name="Murnane C."/>
            <person name="Gray E."/>
            <person name="Humphries M."/>
            <person name="Sycamore N."/>
            <person name="Barker D."/>
            <person name="Saunders D."/>
            <person name="Wallis J."/>
            <person name="Babbage A."/>
            <person name="Hammond S."/>
            <person name="Mashreghi-Mohammadi M."/>
            <person name="Barr L."/>
            <person name="Martin S."/>
            <person name="Wray P."/>
            <person name="Ellington A."/>
            <person name="Matthews N."/>
            <person name="Ellwood M."/>
            <person name="Woodmansey R."/>
            <person name="Clark G."/>
            <person name="Cooper J."/>
            <person name="Tromans A."/>
            <person name="Grafham D."/>
            <person name="Skuce C."/>
            <person name="Pandian R."/>
            <person name="Andrews R."/>
            <person name="Harrison E."/>
            <person name="Kimberley A."/>
            <person name="Garnett J."/>
            <person name="Fosker N."/>
            <person name="Hall R."/>
            <person name="Garner P."/>
            <person name="Kelly D."/>
            <person name="Bird C."/>
            <person name="Palmer S."/>
            <person name="Gehring I."/>
            <person name="Berger A."/>
            <person name="Dooley C.M."/>
            <person name="Ersan-Urun Z."/>
            <person name="Eser C."/>
            <person name="Geiger H."/>
            <person name="Geisler M."/>
            <person name="Karotki L."/>
            <person name="Kirn A."/>
            <person name="Konantz J."/>
            <person name="Konantz M."/>
            <person name="Oberlander M."/>
            <person name="Rudolph-Geiger S."/>
            <person name="Teucke M."/>
            <person name="Lanz C."/>
            <person name="Raddatz G."/>
            <person name="Osoegawa K."/>
            <person name="Zhu B."/>
            <person name="Rapp A."/>
            <person name="Widaa S."/>
            <person name="Langford C."/>
            <person name="Yang F."/>
            <person name="Schuster S.C."/>
            <person name="Carter N.P."/>
            <person name="Harrow J."/>
            <person name="Ning Z."/>
            <person name="Herrero J."/>
            <person name="Searle S.M."/>
            <person name="Enright A."/>
            <person name="Geisler R."/>
            <person name="Plasterk R.H."/>
            <person name="Lee C."/>
            <person name="Westerfield M."/>
            <person name="de Jong P.J."/>
            <person name="Zon L.I."/>
            <person name="Postlethwait J.H."/>
            <person name="Nusslein-Volhard C."/>
            <person name="Hubbard T.J."/>
            <person name="Roest Crollius H."/>
            <person name="Rogers J."/>
            <person name="Stemple D.L."/>
        </authorList>
    </citation>
    <scope>NUCLEOTIDE SEQUENCE [LARGE SCALE GENOMIC DNA]</scope>
    <source>
        <strain>Tuebingen</strain>
    </source>
</reference>
<reference key="2">
    <citation type="journal article" date="2012" name="Nat. Cell Biol.">
        <title>Distinct and separable activities of the endocytic clathrin-coat components Fcho1/2 and AP-2 in developmental patterning.</title>
        <authorList>
            <person name="Umasankar P.K."/>
            <person name="Sanker S."/>
            <person name="Thieman J.R."/>
            <person name="Chakraborty S."/>
            <person name="Wendland B."/>
            <person name="Tsang M."/>
            <person name="Traub L.M."/>
        </authorList>
    </citation>
    <scope>FUNCTION IN BMP SIGNALING</scope>
    <scope>DISRUPTION PHENOTYPE</scope>
    <scope>INTERACTION WITH ACVR1L</scope>
</reference>
<accession>E7FBF7</accession>
<name>FCHO1_DANRE</name>
<dbReference type="EMBL" id="CR450804">
    <property type="status" value="NOT_ANNOTATED_CDS"/>
    <property type="molecule type" value="Genomic_DNA"/>
</dbReference>
<dbReference type="SMR" id="E7FBF7"/>
<dbReference type="FunCoup" id="E7FBF7">
    <property type="interactions" value="839"/>
</dbReference>
<dbReference type="PaxDb" id="7955-ENSDARP00000033648"/>
<dbReference type="AGR" id="ZFIN:ZDB-GENE-120613-1"/>
<dbReference type="ZFIN" id="ZDB-GENE-120613-1">
    <property type="gene designation" value="fcho1"/>
</dbReference>
<dbReference type="eggNOG" id="KOG2398">
    <property type="taxonomic scope" value="Eukaryota"/>
</dbReference>
<dbReference type="InParanoid" id="E7FBF7"/>
<dbReference type="PRO" id="PR:E7FBF7"/>
<dbReference type="Proteomes" id="UP000000437">
    <property type="component" value="Unplaced"/>
</dbReference>
<dbReference type="GO" id="GO:0005905">
    <property type="term" value="C:clathrin-coated pit"/>
    <property type="evidence" value="ECO:0000318"/>
    <property type="project" value="GO_Central"/>
</dbReference>
<dbReference type="GO" id="GO:0030136">
    <property type="term" value="C:clathrin-coated vesicle"/>
    <property type="evidence" value="ECO:0000318"/>
    <property type="project" value="GO_Central"/>
</dbReference>
<dbReference type="GO" id="GO:0005737">
    <property type="term" value="C:cytoplasm"/>
    <property type="evidence" value="ECO:0000318"/>
    <property type="project" value="GO_Central"/>
</dbReference>
<dbReference type="GO" id="GO:0005886">
    <property type="term" value="C:plasma membrane"/>
    <property type="evidence" value="ECO:0000314"/>
    <property type="project" value="ZFIN"/>
</dbReference>
<dbReference type="GO" id="GO:0030509">
    <property type="term" value="P:BMP signaling pathway"/>
    <property type="evidence" value="ECO:0000316"/>
    <property type="project" value="ZFIN"/>
</dbReference>
<dbReference type="GO" id="GO:0048268">
    <property type="term" value="P:clathrin coat assembly"/>
    <property type="evidence" value="ECO:0000250"/>
    <property type="project" value="UniProtKB"/>
</dbReference>
<dbReference type="GO" id="GO:0072583">
    <property type="term" value="P:clathrin-dependent endocytosis"/>
    <property type="evidence" value="ECO:0000250"/>
    <property type="project" value="UniProtKB"/>
</dbReference>
<dbReference type="GO" id="GO:0060028">
    <property type="term" value="P:convergent extension involved in axis elongation"/>
    <property type="evidence" value="ECO:0000316"/>
    <property type="project" value="ZFIN"/>
</dbReference>
<dbReference type="GO" id="GO:0009953">
    <property type="term" value="P:dorsal/ventral pattern formation"/>
    <property type="evidence" value="ECO:0000315"/>
    <property type="project" value="ZFIN"/>
</dbReference>
<dbReference type="CDD" id="cd07674">
    <property type="entry name" value="F-BAR_FCHO1"/>
    <property type="match status" value="1"/>
</dbReference>
<dbReference type="CDD" id="cd09268">
    <property type="entry name" value="FCHo1_MHD"/>
    <property type="match status" value="1"/>
</dbReference>
<dbReference type="FunFam" id="1.20.1270.60:FF:000016">
    <property type="entry name" value="FCH domain only protein 2"/>
    <property type="match status" value="1"/>
</dbReference>
<dbReference type="Gene3D" id="1.20.1270.60">
    <property type="entry name" value="Arfaptin homology (AH) domain/BAR domain"/>
    <property type="match status" value="1"/>
</dbReference>
<dbReference type="InterPro" id="IPR027267">
    <property type="entry name" value="AH/BAR_dom_sf"/>
</dbReference>
<dbReference type="InterPro" id="IPR031160">
    <property type="entry name" value="F_BAR"/>
</dbReference>
<dbReference type="InterPro" id="IPR001060">
    <property type="entry name" value="FCH_dom"/>
</dbReference>
<dbReference type="InterPro" id="IPR042735">
    <property type="entry name" value="FCHO1_F-BAR"/>
</dbReference>
<dbReference type="InterPro" id="IPR054713">
    <property type="entry name" value="GMIP/FCHO2-like_FCH"/>
</dbReference>
<dbReference type="InterPro" id="IPR028565">
    <property type="entry name" value="MHD"/>
</dbReference>
<dbReference type="InterPro" id="IPR018808">
    <property type="entry name" value="Muniscin_C"/>
</dbReference>
<dbReference type="PANTHER" id="PTHR23065:SF6">
    <property type="entry name" value="F-BAR DOMAIN ONLY PROTEIN 1"/>
    <property type="match status" value="1"/>
</dbReference>
<dbReference type="PANTHER" id="PTHR23065">
    <property type="entry name" value="PROLINE-SERINE-THREONINE PHOSPHATASE INTERACTING PROTEIN 1"/>
    <property type="match status" value="1"/>
</dbReference>
<dbReference type="Pfam" id="PF22699">
    <property type="entry name" value="GMIP-like_FCH"/>
    <property type="match status" value="1"/>
</dbReference>
<dbReference type="Pfam" id="PF10291">
    <property type="entry name" value="muHD"/>
    <property type="match status" value="1"/>
</dbReference>
<dbReference type="SMART" id="SM00055">
    <property type="entry name" value="FCH"/>
    <property type="match status" value="1"/>
</dbReference>
<dbReference type="SUPFAM" id="SSF103657">
    <property type="entry name" value="BAR/IMD domain-like"/>
    <property type="match status" value="1"/>
</dbReference>
<dbReference type="PROSITE" id="PS51741">
    <property type="entry name" value="F_BAR"/>
    <property type="match status" value="1"/>
</dbReference>
<dbReference type="PROSITE" id="PS51072">
    <property type="entry name" value="MHD"/>
    <property type="match status" value="1"/>
</dbReference>
<proteinExistence type="evidence at protein level"/>